<proteinExistence type="inferred from homology"/>
<feature type="chain" id="PRO_1000097583" description="Queuine tRNA-ribosyltransferase">
    <location>
        <begin position="1"/>
        <end position="374"/>
    </location>
</feature>
<feature type="region of interest" description="RNA binding" evidence="1">
    <location>
        <begin position="245"/>
        <end position="251"/>
    </location>
</feature>
<feature type="region of interest" description="RNA binding; important for wobble base 34 recognition" evidence="1">
    <location>
        <begin position="269"/>
        <end position="273"/>
    </location>
</feature>
<feature type="active site" description="Proton acceptor" evidence="1">
    <location>
        <position position="89"/>
    </location>
</feature>
<feature type="active site" description="Nucleophile" evidence="1">
    <location>
        <position position="264"/>
    </location>
</feature>
<feature type="binding site" evidence="1">
    <location>
        <begin position="89"/>
        <end position="93"/>
    </location>
    <ligand>
        <name>substrate</name>
    </ligand>
</feature>
<feature type="binding site" evidence="1">
    <location>
        <position position="143"/>
    </location>
    <ligand>
        <name>substrate</name>
    </ligand>
</feature>
<feature type="binding site" evidence="1">
    <location>
        <position position="187"/>
    </location>
    <ligand>
        <name>substrate</name>
    </ligand>
</feature>
<feature type="binding site" evidence="1">
    <location>
        <position position="214"/>
    </location>
    <ligand>
        <name>substrate</name>
    </ligand>
</feature>
<feature type="binding site" evidence="1">
    <location>
        <position position="302"/>
    </location>
    <ligand>
        <name>Zn(2+)</name>
        <dbReference type="ChEBI" id="CHEBI:29105"/>
    </ligand>
</feature>
<feature type="binding site" evidence="1">
    <location>
        <position position="304"/>
    </location>
    <ligand>
        <name>Zn(2+)</name>
        <dbReference type="ChEBI" id="CHEBI:29105"/>
    </ligand>
</feature>
<feature type="binding site" evidence="1">
    <location>
        <position position="307"/>
    </location>
    <ligand>
        <name>Zn(2+)</name>
        <dbReference type="ChEBI" id="CHEBI:29105"/>
    </ligand>
</feature>
<feature type="binding site" evidence="1">
    <location>
        <position position="333"/>
    </location>
    <ligand>
        <name>Zn(2+)</name>
        <dbReference type="ChEBI" id="CHEBI:29105"/>
    </ligand>
</feature>
<sequence>MKYELQKTDGRARRGRLVFERGVVETPAFMPVGTYGTVKGMTPEEVKETGAQILLGNTFHLWLRPGQEIMKLHGDLHDFMQWHGPILTDSGGFQVFSLGAMRKIKEEGVHFKNPINGDSVFLSPEKSMEIQYDLGSDIVMIFDECTPYPADWDYAKRSMEMSLRWAARSRQRFDELNNKNALFGIIQGGVYEDLRDVSVKGLVDIGFDGYAVGGLAVGEPKEDMHRILEHVCPQIPEDKPRYLMGVGKPEDLVEGVRRGIDMFDCVMPTRNARNGHLFVTDGVVKIRNAKHKDDTATLDEHCDCYTCRHYSRAYLHHLDRCNEILGARLNTIHNLRYYQRLMAGLRQAIEEGKLEHFVEDFYGRIGKPVPPLNV</sequence>
<dbReference type="EC" id="2.4.2.29" evidence="1"/>
<dbReference type="EMBL" id="CP000950">
    <property type="protein sequence ID" value="ACA69533.1"/>
    <property type="molecule type" value="Genomic_DNA"/>
</dbReference>
<dbReference type="RefSeq" id="WP_002208672.1">
    <property type="nucleotide sequence ID" value="NZ_CP009792.1"/>
</dbReference>
<dbReference type="SMR" id="B1JIE9"/>
<dbReference type="GeneID" id="57975522"/>
<dbReference type="KEGG" id="ypy:YPK_3264"/>
<dbReference type="PATRIC" id="fig|502800.11.peg.3993"/>
<dbReference type="UniPathway" id="UPA00392"/>
<dbReference type="GO" id="GO:0005829">
    <property type="term" value="C:cytosol"/>
    <property type="evidence" value="ECO:0007669"/>
    <property type="project" value="TreeGrafter"/>
</dbReference>
<dbReference type="GO" id="GO:0046872">
    <property type="term" value="F:metal ion binding"/>
    <property type="evidence" value="ECO:0007669"/>
    <property type="project" value="UniProtKB-KW"/>
</dbReference>
<dbReference type="GO" id="GO:0008479">
    <property type="term" value="F:tRNA-guanosine(34) queuine transglycosylase activity"/>
    <property type="evidence" value="ECO:0007669"/>
    <property type="project" value="UniProtKB-UniRule"/>
</dbReference>
<dbReference type="GO" id="GO:0008616">
    <property type="term" value="P:queuosine biosynthetic process"/>
    <property type="evidence" value="ECO:0007669"/>
    <property type="project" value="UniProtKB-UniRule"/>
</dbReference>
<dbReference type="GO" id="GO:0002099">
    <property type="term" value="P:tRNA wobble guanine modification"/>
    <property type="evidence" value="ECO:0007669"/>
    <property type="project" value="TreeGrafter"/>
</dbReference>
<dbReference type="GO" id="GO:0101030">
    <property type="term" value="P:tRNA-guanine transglycosylation"/>
    <property type="evidence" value="ECO:0007669"/>
    <property type="project" value="InterPro"/>
</dbReference>
<dbReference type="FunFam" id="3.20.20.105:FF:000001">
    <property type="entry name" value="Queuine tRNA-ribosyltransferase"/>
    <property type="match status" value="1"/>
</dbReference>
<dbReference type="Gene3D" id="3.20.20.105">
    <property type="entry name" value="Queuine tRNA-ribosyltransferase-like"/>
    <property type="match status" value="1"/>
</dbReference>
<dbReference type="HAMAP" id="MF_00168">
    <property type="entry name" value="Q_tRNA_Tgt"/>
    <property type="match status" value="1"/>
</dbReference>
<dbReference type="InterPro" id="IPR050076">
    <property type="entry name" value="ArchSynthase1/Queuine_TRR"/>
</dbReference>
<dbReference type="InterPro" id="IPR004803">
    <property type="entry name" value="TGT"/>
</dbReference>
<dbReference type="InterPro" id="IPR036511">
    <property type="entry name" value="TGT-like_sf"/>
</dbReference>
<dbReference type="InterPro" id="IPR002616">
    <property type="entry name" value="tRNA_ribo_trans-like"/>
</dbReference>
<dbReference type="NCBIfam" id="TIGR00430">
    <property type="entry name" value="Q_tRNA_tgt"/>
    <property type="match status" value="1"/>
</dbReference>
<dbReference type="NCBIfam" id="TIGR00449">
    <property type="entry name" value="tgt_general"/>
    <property type="match status" value="1"/>
</dbReference>
<dbReference type="PANTHER" id="PTHR46499">
    <property type="entry name" value="QUEUINE TRNA-RIBOSYLTRANSFERASE"/>
    <property type="match status" value="1"/>
</dbReference>
<dbReference type="PANTHER" id="PTHR46499:SF1">
    <property type="entry name" value="QUEUINE TRNA-RIBOSYLTRANSFERASE"/>
    <property type="match status" value="1"/>
</dbReference>
<dbReference type="Pfam" id="PF01702">
    <property type="entry name" value="TGT"/>
    <property type="match status" value="1"/>
</dbReference>
<dbReference type="SUPFAM" id="SSF51713">
    <property type="entry name" value="tRNA-guanine transglycosylase"/>
    <property type="match status" value="1"/>
</dbReference>
<comment type="function">
    <text evidence="1">Catalyzes the base-exchange of a guanine (G) residue with the queuine precursor 7-aminomethyl-7-deazaguanine (PreQ1) at position 34 (anticodon wobble position) in tRNAs with GU(N) anticodons (tRNA-Asp, -Asn, -His and -Tyr). Catalysis occurs through a double-displacement mechanism. The nucleophile active site attacks the C1' of nucleotide 34 to detach the guanine base from the RNA, forming a covalent enzyme-RNA intermediate. The proton acceptor active site deprotonates the incoming PreQ1, allowing a nucleophilic attack on the C1' of the ribose to form the product. After dissociation, two additional enzymatic reactions on the tRNA convert PreQ1 to queuine (Q), resulting in the hypermodified nucleoside queuosine (7-(((4,5-cis-dihydroxy-2-cyclopenten-1-yl)amino)methyl)-7-deazaguanosine).</text>
</comment>
<comment type="catalytic activity">
    <reaction evidence="1">
        <text>7-aminomethyl-7-carbaguanine + guanosine(34) in tRNA = 7-aminomethyl-7-carbaguanosine(34) in tRNA + guanine</text>
        <dbReference type="Rhea" id="RHEA:24104"/>
        <dbReference type="Rhea" id="RHEA-COMP:10341"/>
        <dbReference type="Rhea" id="RHEA-COMP:10342"/>
        <dbReference type="ChEBI" id="CHEBI:16235"/>
        <dbReference type="ChEBI" id="CHEBI:58703"/>
        <dbReference type="ChEBI" id="CHEBI:74269"/>
        <dbReference type="ChEBI" id="CHEBI:82833"/>
        <dbReference type="EC" id="2.4.2.29"/>
    </reaction>
</comment>
<comment type="cofactor">
    <cofactor evidence="1">
        <name>Zn(2+)</name>
        <dbReference type="ChEBI" id="CHEBI:29105"/>
    </cofactor>
    <text evidence="1">Binds 1 zinc ion per subunit.</text>
</comment>
<comment type="pathway">
    <text evidence="1">tRNA modification; tRNA-queuosine biosynthesis.</text>
</comment>
<comment type="subunit">
    <text evidence="1">Homodimer. Within each dimer, one monomer is responsible for RNA recognition and catalysis, while the other monomer binds to the replacement base PreQ1.</text>
</comment>
<comment type="similarity">
    <text evidence="1">Belongs to the queuine tRNA-ribosyltransferase family.</text>
</comment>
<accession>B1JIE9</accession>
<name>TGT_YERPY</name>
<keyword id="KW-0328">Glycosyltransferase</keyword>
<keyword id="KW-0479">Metal-binding</keyword>
<keyword id="KW-0671">Queuosine biosynthesis</keyword>
<keyword id="KW-0808">Transferase</keyword>
<keyword id="KW-0819">tRNA processing</keyword>
<keyword id="KW-0862">Zinc</keyword>
<reference key="1">
    <citation type="submission" date="2008-02" db="EMBL/GenBank/DDBJ databases">
        <title>Complete sequence of Yersinia pseudotuberculosis YPIII.</title>
        <authorList>
            <consortium name="US DOE Joint Genome Institute"/>
            <person name="Copeland A."/>
            <person name="Lucas S."/>
            <person name="Lapidus A."/>
            <person name="Glavina del Rio T."/>
            <person name="Dalin E."/>
            <person name="Tice H."/>
            <person name="Bruce D."/>
            <person name="Goodwin L."/>
            <person name="Pitluck S."/>
            <person name="Munk A.C."/>
            <person name="Brettin T."/>
            <person name="Detter J.C."/>
            <person name="Han C."/>
            <person name="Tapia R."/>
            <person name="Schmutz J."/>
            <person name="Larimer F."/>
            <person name="Land M."/>
            <person name="Hauser L."/>
            <person name="Challacombe J.F."/>
            <person name="Green L."/>
            <person name="Lindler L.E."/>
            <person name="Nikolich M.P."/>
            <person name="Richardson P."/>
        </authorList>
    </citation>
    <scope>NUCLEOTIDE SEQUENCE [LARGE SCALE GENOMIC DNA]</scope>
    <source>
        <strain>YPIII</strain>
    </source>
</reference>
<gene>
    <name evidence="1" type="primary">tgt</name>
    <name type="ordered locus">YPK_3264</name>
</gene>
<protein>
    <recommendedName>
        <fullName evidence="1">Queuine tRNA-ribosyltransferase</fullName>
        <ecNumber evidence="1">2.4.2.29</ecNumber>
    </recommendedName>
    <alternativeName>
        <fullName evidence="1">Guanine insertion enzyme</fullName>
    </alternativeName>
    <alternativeName>
        <fullName evidence="1">tRNA-guanine transglycosylase</fullName>
    </alternativeName>
</protein>
<evidence type="ECO:0000255" key="1">
    <source>
        <dbReference type="HAMAP-Rule" id="MF_00168"/>
    </source>
</evidence>
<organism>
    <name type="scientific">Yersinia pseudotuberculosis serotype O:3 (strain YPIII)</name>
    <dbReference type="NCBI Taxonomy" id="502800"/>
    <lineage>
        <taxon>Bacteria</taxon>
        <taxon>Pseudomonadati</taxon>
        <taxon>Pseudomonadota</taxon>
        <taxon>Gammaproteobacteria</taxon>
        <taxon>Enterobacterales</taxon>
        <taxon>Yersiniaceae</taxon>
        <taxon>Yersinia</taxon>
    </lineage>
</organism>